<reference key="1">
    <citation type="journal article" date="1995" name="Curr. Genet.">
        <title>The genes encoding subunit 3 of NADH dehydrogenase and ribosomal protein S12 are co-transcribed and edited in Pinus sylvestris (L.) mitochondria.</title>
        <authorList>
            <person name="Karpinska B."/>
            <person name="Karpinski S."/>
            <person name="Hallgren J.E."/>
        </authorList>
    </citation>
    <scope>NUCLEOTIDE SEQUENCE [GENOMIC DNA]</scope>
    <scope>RNA EDITING</scope>
    <source>
        <tissue>Cotyledon</tissue>
    </source>
</reference>
<protein>
    <recommendedName>
        <fullName>NADH-ubiquinone oxidoreductase chain 3</fullName>
        <ecNumber>7.1.1.2</ecNumber>
    </recommendedName>
    <alternativeName>
        <fullName>NADH dehydrogenase subunit 3</fullName>
    </alternativeName>
</protein>
<comment type="function">
    <text evidence="1">Core subunit of the mitochondrial membrane respiratory chain NADH dehydrogenase (Complex I) that is believed to belong to the minimal assembly required for catalysis. Complex I functions in the transfer of electrons from NADH to the respiratory chain. The immediate electron acceptor for the enzyme is believed to be ubiquinone (By similarity).</text>
</comment>
<comment type="catalytic activity">
    <reaction>
        <text>a ubiquinone + NADH + 5 H(+)(in) = a ubiquinol + NAD(+) + 4 H(+)(out)</text>
        <dbReference type="Rhea" id="RHEA:29091"/>
        <dbReference type="Rhea" id="RHEA-COMP:9565"/>
        <dbReference type="Rhea" id="RHEA-COMP:9566"/>
        <dbReference type="ChEBI" id="CHEBI:15378"/>
        <dbReference type="ChEBI" id="CHEBI:16389"/>
        <dbReference type="ChEBI" id="CHEBI:17976"/>
        <dbReference type="ChEBI" id="CHEBI:57540"/>
        <dbReference type="ChEBI" id="CHEBI:57945"/>
        <dbReference type="EC" id="7.1.1.2"/>
    </reaction>
</comment>
<comment type="subcellular location">
    <subcellularLocation>
        <location evidence="1">Mitochondrion membrane</location>
        <topology evidence="1">Multi-pass membrane protein</topology>
    </subcellularLocation>
</comment>
<comment type="RNA editing">
    <location>
        <position position="15" evidence="3"/>
    </location>
    <location>
        <position position="27" evidence="3"/>
    </location>
    <location>
        <position position="30" evidence="3"/>
    </location>
    <location>
        <position position="42" evidence="3"/>
    </location>
    <location>
        <position position="46" evidence="3"/>
    </location>
    <location>
        <position position="49" evidence="3"/>
    </location>
    <location>
        <position position="62" evidence="3"/>
    </location>
    <location>
        <position position="64" evidence="3"/>
    </location>
    <location>
        <position position="66" evidence="3"/>
    </location>
    <location>
        <position position="70" evidence="3"/>
    </location>
    <location>
        <position position="72" evidence="3"/>
    </location>
    <location>
        <position position="77" evidence="3"/>
    </location>
    <location>
        <position position="78" evidence="3"/>
    </location>
    <location>
        <position position="80" evidence="3"/>
    </location>
    <location>
        <position position="83" evidence="3"/>
    </location>
    <location>
        <position position="89" evidence="3"/>
    </location>
    <location>
        <position position="92" evidence="3"/>
    </location>
    <location>
        <position position="93" evidence="3"/>
    </location>
    <location>
        <position position="99" evidence="3"/>
    </location>
    <location>
        <position position="102" evidence="3"/>
    </location>
    <location>
        <position position="107" evidence="3"/>
    </location>
    <location>
        <position position="108" evidence="3"/>
    </location>
    <location>
        <position position="115" evidence="3"/>
    </location>
    <location>
        <position position="117" evidence="3"/>
    </location>
</comment>
<comment type="similarity">
    <text evidence="4">Belongs to the complex I subunit 3 family.</text>
</comment>
<keyword id="KW-0249">Electron transport</keyword>
<keyword id="KW-0472">Membrane</keyword>
<keyword id="KW-0496">Mitochondrion</keyword>
<keyword id="KW-0520">NAD</keyword>
<keyword id="KW-0679">Respiratory chain</keyword>
<keyword id="KW-0691">RNA editing</keyword>
<keyword id="KW-1278">Translocase</keyword>
<keyword id="KW-0812">Transmembrane</keyword>
<keyword id="KW-1133">Transmembrane helix</keyword>
<keyword id="KW-0813">Transport</keyword>
<keyword id="KW-0830">Ubiquinone</keyword>
<name>NU3M_PINSY</name>
<accession>Q36664</accession>
<gene>
    <name type="primary">NAD3</name>
</gene>
<sequence length="118" mass="13669">MSEFAPICIYLVISLLVCLIPLGVPFLFASNGSTYPEKLSAYECGFDPFGDARSRFDIRFYLVSILFIIFDLEVTFFFPWAVSLNKIDLFGFWSMMVFLLILTIGFLYEWKKGALDWE</sequence>
<geneLocation type="mitochondrion"/>
<feature type="chain" id="PRO_0000117806" description="NADH-ubiquinone oxidoreductase chain 3">
    <location>
        <begin position="1"/>
        <end position="118"/>
    </location>
</feature>
<feature type="transmembrane region" description="Helical" evidence="2">
    <location>
        <begin position="9"/>
        <end position="29"/>
    </location>
</feature>
<feature type="transmembrane region" description="Helical" evidence="2">
    <location>
        <begin position="62"/>
        <end position="82"/>
    </location>
</feature>
<feature type="transmembrane region" description="Helical" evidence="2">
    <location>
        <begin position="87"/>
        <end position="107"/>
    </location>
</feature>
<dbReference type="EC" id="7.1.1.2"/>
<dbReference type="EMBL" id="X86217">
    <property type="protein sequence ID" value="CAA60117.1"/>
    <property type="status" value="ALT_SEQ"/>
    <property type="molecule type" value="Genomic_DNA"/>
</dbReference>
<dbReference type="PIR" id="S60468">
    <property type="entry name" value="S60468"/>
</dbReference>
<dbReference type="SMR" id="Q36664"/>
<dbReference type="GO" id="GO:0031966">
    <property type="term" value="C:mitochondrial membrane"/>
    <property type="evidence" value="ECO:0007669"/>
    <property type="project" value="UniProtKB-SubCell"/>
</dbReference>
<dbReference type="GO" id="GO:0030964">
    <property type="term" value="C:NADH dehydrogenase complex"/>
    <property type="evidence" value="ECO:0007669"/>
    <property type="project" value="TreeGrafter"/>
</dbReference>
<dbReference type="GO" id="GO:0008137">
    <property type="term" value="F:NADH dehydrogenase (ubiquinone) activity"/>
    <property type="evidence" value="ECO:0007669"/>
    <property type="project" value="UniProtKB-EC"/>
</dbReference>
<dbReference type="FunFam" id="1.20.58.1610:FF:000006">
    <property type="entry name" value="NADH-ubiquinone oxidoreductase chain 3"/>
    <property type="match status" value="1"/>
</dbReference>
<dbReference type="Gene3D" id="1.20.58.1610">
    <property type="entry name" value="NADH:ubiquinone/plastoquinone oxidoreductase, chain 3"/>
    <property type="match status" value="1"/>
</dbReference>
<dbReference type="HAMAP" id="MF_01394">
    <property type="entry name" value="NDH1_NuoA"/>
    <property type="match status" value="1"/>
</dbReference>
<dbReference type="InterPro" id="IPR023043">
    <property type="entry name" value="NAD(P)H_OxRDtase_bac/plastid"/>
</dbReference>
<dbReference type="InterPro" id="IPR000440">
    <property type="entry name" value="NADH_UbQ/plastoQ_OxRdtase_su3"/>
</dbReference>
<dbReference type="InterPro" id="IPR038430">
    <property type="entry name" value="NDAH_ubi_oxred_su3_sf"/>
</dbReference>
<dbReference type="PANTHER" id="PTHR11058">
    <property type="entry name" value="NADH-UBIQUINONE OXIDOREDUCTASE CHAIN 3"/>
    <property type="match status" value="1"/>
</dbReference>
<dbReference type="PANTHER" id="PTHR11058:SF9">
    <property type="entry name" value="NADH-UBIQUINONE OXIDOREDUCTASE CHAIN 3"/>
    <property type="match status" value="1"/>
</dbReference>
<dbReference type="Pfam" id="PF00507">
    <property type="entry name" value="Oxidored_q4"/>
    <property type="match status" value="1"/>
</dbReference>
<organism>
    <name type="scientific">Pinus sylvestris</name>
    <name type="common">Scotch pine</name>
    <dbReference type="NCBI Taxonomy" id="3349"/>
    <lineage>
        <taxon>Eukaryota</taxon>
        <taxon>Viridiplantae</taxon>
        <taxon>Streptophyta</taxon>
        <taxon>Embryophyta</taxon>
        <taxon>Tracheophyta</taxon>
        <taxon>Spermatophyta</taxon>
        <taxon>Pinopsida</taxon>
        <taxon>Pinidae</taxon>
        <taxon>Conifers I</taxon>
        <taxon>Pinales</taxon>
        <taxon>Pinaceae</taxon>
        <taxon>Pinus</taxon>
        <taxon>Pinus subgen. Pinus</taxon>
    </lineage>
</organism>
<evidence type="ECO:0000250" key="1"/>
<evidence type="ECO:0000255" key="2"/>
<evidence type="ECO:0000269" key="3">
    <source>
    </source>
</evidence>
<evidence type="ECO:0000305" key="4"/>
<proteinExistence type="evidence at transcript level"/>